<accession>B0TW34</accession>
<dbReference type="EMBL" id="CP000937">
    <property type="protein sequence ID" value="ABZ86942.1"/>
    <property type="molecule type" value="Genomic_DNA"/>
</dbReference>
<dbReference type="SMR" id="B0TW34"/>
<dbReference type="KEGG" id="fph:Fphi_0721"/>
<dbReference type="eggNOG" id="COG0268">
    <property type="taxonomic scope" value="Bacteria"/>
</dbReference>
<dbReference type="HOGENOM" id="CLU_160655_4_0_6"/>
<dbReference type="GO" id="GO:0005829">
    <property type="term" value="C:cytosol"/>
    <property type="evidence" value="ECO:0007669"/>
    <property type="project" value="TreeGrafter"/>
</dbReference>
<dbReference type="GO" id="GO:0015935">
    <property type="term" value="C:small ribosomal subunit"/>
    <property type="evidence" value="ECO:0007669"/>
    <property type="project" value="TreeGrafter"/>
</dbReference>
<dbReference type="GO" id="GO:0070181">
    <property type="term" value="F:small ribosomal subunit rRNA binding"/>
    <property type="evidence" value="ECO:0007669"/>
    <property type="project" value="TreeGrafter"/>
</dbReference>
<dbReference type="GO" id="GO:0003735">
    <property type="term" value="F:structural constituent of ribosome"/>
    <property type="evidence" value="ECO:0007669"/>
    <property type="project" value="InterPro"/>
</dbReference>
<dbReference type="GO" id="GO:0006412">
    <property type="term" value="P:translation"/>
    <property type="evidence" value="ECO:0007669"/>
    <property type="project" value="UniProtKB-UniRule"/>
</dbReference>
<dbReference type="FunFam" id="1.20.58.110:FF:000001">
    <property type="entry name" value="30S ribosomal protein S20"/>
    <property type="match status" value="1"/>
</dbReference>
<dbReference type="Gene3D" id="1.20.58.110">
    <property type="entry name" value="Ribosomal protein S20"/>
    <property type="match status" value="1"/>
</dbReference>
<dbReference type="HAMAP" id="MF_00500">
    <property type="entry name" value="Ribosomal_bS20"/>
    <property type="match status" value="1"/>
</dbReference>
<dbReference type="InterPro" id="IPR002583">
    <property type="entry name" value="Ribosomal_bS20"/>
</dbReference>
<dbReference type="InterPro" id="IPR036510">
    <property type="entry name" value="Ribosomal_bS20_sf"/>
</dbReference>
<dbReference type="NCBIfam" id="TIGR00029">
    <property type="entry name" value="S20"/>
    <property type="match status" value="1"/>
</dbReference>
<dbReference type="PANTHER" id="PTHR33398">
    <property type="entry name" value="30S RIBOSOMAL PROTEIN S20"/>
    <property type="match status" value="1"/>
</dbReference>
<dbReference type="PANTHER" id="PTHR33398:SF1">
    <property type="entry name" value="SMALL RIBOSOMAL SUBUNIT PROTEIN BS20C"/>
    <property type="match status" value="1"/>
</dbReference>
<dbReference type="Pfam" id="PF01649">
    <property type="entry name" value="Ribosomal_S20p"/>
    <property type="match status" value="1"/>
</dbReference>
<dbReference type="SUPFAM" id="SSF46992">
    <property type="entry name" value="Ribosomal protein S20"/>
    <property type="match status" value="1"/>
</dbReference>
<feature type="chain" id="PRO_1000081430" description="Small ribosomal subunit protein bS20">
    <location>
        <begin position="1"/>
        <end position="90"/>
    </location>
</feature>
<comment type="function">
    <text evidence="1">Binds directly to 16S ribosomal RNA.</text>
</comment>
<comment type="similarity">
    <text evidence="1">Belongs to the bacterial ribosomal protein bS20 family.</text>
</comment>
<reference key="1">
    <citation type="submission" date="2007-12" db="EMBL/GenBank/DDBJ databases">
        <title>Complete sequence of chromosome of Francisella philomiragia subsp. philomiragia ATCC 25017.</title>
        <authorList>
            <consortium name="US DOE Joint Genome Institute"/>
            <person name="Copeland A."/>
            <person name="Lucas S."/>
            <person name="Lapidus A."/>
            <person name="Barry K."/>
            <person name="Detter J.C."/>
            <person name="Glavina del Rio T."/>
            <person name="Hammon N."/>
            <person name="Israni S."/>
            <person name="Dalin E."/>
            <person name="Tice H."/>
            <person name="Pitluck S."/>
            <person name="Chain P."/>
            <person name="Malfatti S."/>
            <person name="Shin M."/>
            <person name="Vergez L."/>
            <person name="Schmutz J."/>
            <person name="Larimer F."/>
            <person name="Land M."/>
            <person name="Hauser L."/>
            <person name="Richardson P."/>
        </authorList>
    </citation>
    <scope>NUCLEOTIDE SEQUENCE [LARGE SCALE GENOMIC DNA]</scope>
    <source>
        <strain>ATCC 25017 / CCUG 19701 / FSC 153 / O#319-036</strain>
    </source>
</reference>
<gene>
    <name evidence="1" type="primary">rpsT</name>
    <name type="ordered locus">Fphi_0721</name>
</gene>
<protein>
    <recommendedName>
        <fullName evidence="1">Small ribosomal subunit protein bS20</fullName>
    </recommendedName>
    <alternativeName>
        <fullName evidence="2">30S ribosomal protein S20</fullName>
    </alternativeName>
</protein>
<organism>
    <name type="scientific">Francisella philomiragia subsp. philomiragia (strain ATCC 25017 / CCUG 19701 / FSC 153 / O#319-036)</name>
    <dbReference type="NCBI Taxonomy" id="484022"/>
    <lineage>
        <taxon>Bacteria</taxon>
        <taxon>Pseudomonadati</taxon>
        <taxon>Pseudomonadota</taxon>
        <taxon>Gammaproteobacteria</taxon>
        <taxon>Thiotrichales</taxon>
        <taxon>Francisellaceae</taxon>
        <taxon>Francisella</taxon>
    </lineage>
</organism>
<sequence>MANSKQAKKRIIQAERNRQHNVARRSMMRTFLKKAAYAIEKGDVEAAKENFAKVVPILDKYASKGLIHKNKAARHKSRLSAKIKALSTAA</sequence>
<proteinExistence type="inferred from homology"/>
<name>RS20_FRAP2</name>
<keyword id="KW-0687">Ribonucleoprotein</keyword>
<keyword id="KW-0689">Ribosomal protein</keyword>
<keyword id="KW-0694">RNA-binding</keyword>
<keyword id="KW-0699">rRNA-binding</keyword>
<evidence type="ECO:0000255" key="1">
    <source>
        <dbReference type="HAMAP-Rule" id="MF_00500"/>
    </source>
</evidence>
<evidence type="ECO:0000305" key="2"/>